<accession>Q2FH96</accession>
<evidence type="ECO:0000255" key="1">
    <source>
        <dbReference type="HAMAP-Rule" id="MF_01511"/>
    </source>
</evidence>
<proteinExistence type="inferred from homology"/>
<feature type="chain" id="PRO_0000294286" description="GMP reductase">
    <location>
        <begin position="1"/>
        <end position="325"/>
    </location>
</feature>
<feature type="active site" description="Thioimidate intermediate" evidence="1">
    <location>
        <position position="174"/>
    </location>
</feature>
<feature type="binding site" evidence="1">
    <location>
        <begin position="203"/>
        <end position="226"/>
    </location>
    <ligand>
        <name>NADP(+)</name>
        <dbReference type="ChEBI" id="CHEBI:58349"/>
    </ligand>
</feature>
<dbReference type="EC" id="1.7.1.7" evidence="1"/>
<dbReference type="EMBL" id="CP000255">
    <property type="protein sequence ID" value="ABD21078.1"/>
    <property type="molecule type" value="Genomic_DNA"/>
</dbReference>
<dbReference type="RefSeq" id="WP_000688126.1">
    <property type="nucleotide sequence ID" value="NZ_CP027476.1"/>
</dbReference>
<dbReference type="SMR" id="Q2FH96"/>
<dbReference type="KEGG" id="saa:SAUSA300_1235"/>
<dbReference type="HOGENOM" id="CLU_022552_5_0_9"/>
<dbReference type="Proteomes" id="UP000001939">
    <property type="component" value="Chromosome"/>
</dbReference>
<dbReference type="GO" id="GO:0005829">
    <property type="term" value="C:cytosol"/>
    <property type="evidence" value="ECO:0007669"/>
    <property type="project" value="TreeGrafter"/>
</dbReference>
<dbReference type="GO" id="GO:1902560">
    <property type="term" value="C:GMP reductase complex"/>
    <property type="evidence" value="ECO:0007669"/>
    <property type="project" value="InterPro"/>
</dbReference>
<dbReference type="GO" id="GO:0003920">
    <property type="term" value="F:GMP reductase activity"/>
    <property type="evidence" value="ECO:0007669"/>
    <property type="project" value="UniProtKB-UniRule"/>
</dbReference>
<dbReference type="GO" id="GO:0006163">
    <property type="term" value="P:purine nucleotide metabolic process"/>
    <property type="evidence" value="ECO:0007669"/>
    <property type="project" value="UniProtKB-UniRule"/>
</dbReference>
<dbReference type="CDD" id="cd00381">
    <property type="entry name" value="IMPDH"/>
    <property type="match status" value="1"/>
</dbReference>
<dbReference type="FunFam" id="3.20.20.70:FF:000079">
    <property type="entry name" value="GMP reductase"/>
    <property type="match status" value="1"/>
</dbReference>
<dbReference type="Gene3D" id="3.20.20.70">
    <property type="entry name" value="Aldolase class I"/>
    <property type="match status" value="1"/>
</dbReference>
<dbReference type="HAMAP" id="MF_01511">
    <property type="entry name" value="GMP_reduct_type2"/>
    <property type="match status" value="1"/>
</dbReference>
<dbReference type="InterPro" id="IPR013785">
    <property type="entry name" value="Aldolase_TIM"/>
</dbReference>
<dbReference type="InterPro" id="IPR050139">
    <property type="entry name" value="GMP_reductase"/>
</dbReference>
<dbReference type="InterPro" id="IPR005994">
    <property type="entry name" value="GuaC_type_2"/>
</dbReference>
<dbReference type="InterPro" id="IPR015875">
    <property type="entry name" value="IMP_DH/GMP_Rdtase_CS"/>
</dbReference>
<dbReference type="InterPro" id="IPR001093">
    <property type="entry name" value="IMP_DH_GMPRt"/>
</dbReference>
<dbReference type="NCBIfam" id="TIGR01306">
    <property type="entry name" value="GMP_reduct_2"/>
    <property type="match status" value="1"/>
</dbReference>
<dbReference type="NCBIfam" id="NF003966">
    <property type="entry name" value="PRK05458.1"/>
    <property type="match status" value="1"/>
</dbReference>
<dbReference type="PANTHER" id="PTHR43170">
    <property type="entry name" value="GMP REDUCTASE"/>
    <property type="match status" value="1"/>
</dbReference>
<dbReference type="PANTHER" id="PTHR43170:SF5">
    <property type="entry name" value="GMP REDUCTASE"/>
    <property type="match status" value="1"/>
</dbReference>
<dbReference type="Pfam" id="PF00478">
    <property type="entry name" value="IMPDH"/>
    <property type="match status" value="1"/>
</dbReference>
<dbReference type="PIRSF" id="PIRSF036500">
    <property type="entry name" value="GMP_red_Firmic"/>
    <property type="match status" value="1"/>
</dbReference>
<dbReference type="SMART" id="SM01240">
    <property type="entry name" value="IMPDH"/>
    <property type="match status" value="1"/>
</dbReference>
<dbReference type="SUPFAM" id="SSF51412">
    <property type="entry name" value="Inosine monophosphate dehydrogenase (IMPDH)"/>
    <property type="match status" value="1"/>
</dbReference>
<dbReference type="PROSITE" id="PS00487">
    <property type="entry name" value="IMP_DH_GMP_RED"/>
    <property type="match status" value="1"/>
</dbReference>
<organism>
    <name type="scientific">Staphylococcus aureus (strain USA300)</name>
    <dbReference type="NCBI Taxonomy" id="367830"/>
    <lineage>
        <taxon>Bacteria</taxon>
        <taxon>Bacillati</taxon>
        <taxon>Bacillota</taxon>
        <taxon>Bacilli</taxon>
        <taxon>Bacillales</taxon>
        <taxon>Staphylococcaceae</taxon>
        <taxon>Staphylococcus</taxon>
    </lineage>
</organism>
<protein>
    <recommendedName>
        <fullName evidence="1">GMP reductase</fullName>
        <ecNumber evidence="1">1.7.1.7</ecNumber>
    </recommendedName>
    <alternativeName>
        <fullName evidence="1">Guanosine 5'-monophosphate oxidoreductase</fullName>
        <shortName evidence="1">Guanosine monophosphate reductase</shortName>
    </alternativeName>
</protein>
<sequence length="325" mass="36116">MKIFDYEDIQLIPNKCIVESRSECDTTIQFGPKKFKLPVVPANMQTVMNEKLAKWFAENDYFYIMHRFDEEARIPFIKHMQNSGLFASISVGVKKAEFDFIEKLAQEKLIPEYITIDIAHGHSDSVINMIKHIKTHIPDSFVIAGNVGTPEGVRELENAGADATKVGIGPGRVCITKIKTGFGTGGWQLAALNICSKAARKPLIADGGIRTHGDIAKSIRFGASMVMIGSLFAAHEESPGETVELDGKQYKEYFGSASEFQKGEHKNVEGKKMFVEHKGSLMDTLKEMQQDLQSSISYAGGKDLKSLRTVDYVIVRNSIFNGDRD</sequence>
<comment type="function">
    <text evidence="1">Catalyzes the irreversible NADPH-dependent deamination of GMP to IMP. It functions in the conversion of nucleobase, nucleoside and nucleotide derivatives of G to A nucleotides, and in maintaining the intracellular balance of A and G nucleotides.</text>
</comment>
<comment type="catalytic activity">
    <reaction evidence="1">
        <text>IMP + NH4(+) + NADP(+) = GMP + NADPH + 2 H(+)</text>
        <dbReference type="Rhea" id="RHEA:17185"/>
        <dbReference type="ChEBI" id="CHEBI:15378"/>
        <dbReference type="ChEBI" id="CHEBI:28938"/>
        <dbReference type="ChEBI" id="CHEBI:57783"/>
        <dbReference type="ChEBI" id="CHEBI:58053"/>
        <dbReference type="ChEBI" id="CHEBI:58115"/>
        <dbReference type="ChEBI" id="CHEBI:58349"/>
        <dbReference type="EC" id="1.7.1.7"/>
    </reaction>
</comment>
<comment type="similarity">
    <text evidence="1">Belongs to the IMPDH/GMPR family. GuaC type 2 subfamily.</text>
</comment>
<reference key="1">
    <citation type="journal article" date="2006" name="Lancet">
        <title>Complete genome sequence of USA300, an epidemic clone of community-acquired meticillin-resistant Staphylococcus aureus.</title>
        <authorList>
            <person name="Diep B.A."/>
            <person name="Gill S.R."/>
            <person name="Chang R.F."/>
            <person name="Phan T.H."/>
            <person name="Chen J.H."/>
            <person name="Davidson M.G."/>
            <person name="Lin F."/>
            <person name="Lin J."/>
            <person name="Carleton H.A."/>
            <person name="Mongodin E.F."/>
            <person name="Sensabaugh G.F."/>
            <person name="Perdreau-Remington F."/>
        </authorList>
    </citation>
    <scope>NUCLEOTIDE SEQUENCE [LARGE SCALE GENOMIC DNA]</scope>
    <source>
        <strain>USA300</strain>
    </source>
</reference>
<gene>
    <name evidence="1" type="primary">guaC</name>
    <name type="ordered locus">SAUSA300_1235</name>
</gene>
<keyword id="KW-0521">NADP</keyword>
<keyword id="KW-0560">Oxidoreductase</keyword>
<name>GUAC_STAA3</name>